<comment type="function">
    <text evidence="1">The RuvA-RuvB-RuvC complex processes Holliday junction (HJ) DNA during genetic recombination and DNA repair, while the RuvA-RuvB complex plays an important role in the rescue of blocked DNA replication forks via replication fork reversal (RFR). RuvA specifically binds to HJ cruciform DNA, conferring on it an open structure. The RuvB hexamer acts as an ATP-dependent pump, pulling dsDNA into and through the RuvAB complex. HJ branch migration allows RuvC to scan DNA until it finds its consensus sequence, where it cleaves and resolves the cruciform DNA.</text>
</comment>
<comment type="subunit">
    <text evidence="1">Homotetramer. Forms an RuvA(8)-RuvB(12)-Holliday junction (HJ) complex. HJ DNA is sandwiched between 2 RuvA tetramers; dsDNA enters through RuvA and exits via RuvB. An RuvB hexamer assembles on each DNA strand where it exits the tetramer. Each RuvB hexamer is contacted by two RuvA subunits (via domain III) on 2 adjacent RuvB subunits; this complex drives branch migration. In the full resolvosome a probable DNA-RuvA(4)-RuvB(12)-RuvC(2) complex forms which resolves the HJ.</text>
</comment>
<comment type="subcellular location">
    <subcellularLocation>
        <location evidence="1">Cytoplasm</location>
    </subcellularLocation>
</comment>
<comment type="domain">
    <text evidence="1">Has three domains with a flexible linker between the domains II and III and assumes an 'L' shape. Domain III is highly mobile and contacts RuvB.</text>
</comment>
<comment type="similarity">
    <text evidence="1">Belongs to the RuvA family.</text>
</comment>
<accession>A1RJQ3</accession>
<evidence type="ECO:0000255" key="1">
    <source>
        <dbReference type="HAMAP-Rule" id="MF_00031"/>
    </source>
</evidence>
<proteinExistence type="inferred from homology"/>
<feature type="chain" id="PRO_1000002555" description="Holliday junction branch migration complex subunit RuvA">
    <location>
        <begin position="1"/>
        <end position="205"/>
    </location>
</feature>
<feature type="region of interest" description="Domain I" evidence="1">
    <location>
        <begin position="1"/>
        <end position="64"/>
    </location>
</feature>
<feature type="region of interest" description="Domain II" evidence="1">
    <location>
        <begin position="65"/>
        <end position="143"/>
    </location>
</feature>
<feature type="region of interest" description="Flexible linker" evidence="1">
    <location>
        <begin position="144"/>
        <end position="156"/>
    </location>
</feature>
<feature type="region of interest" description="Domain III" evidence="1">
    <location>
        <begin position="157"/>
        <end position="205"/>
    </location>
</feature>
<organism>
    <name type="scientific">Shewanella sp. (strain W3-18-1)</name>
    <dbReference type="NCBI Taxonomy" id="351745"/>
    <lineage>
        <taxon>Bacteria</taxon>
        <taxon>Pseudomonadati</taxon>
        <taxon>Pseudomonadota</taxon>
        <taxon>Gammaproteobacteria</taxon>
        <taxon>Alteromonadales</taxon>
        <taxon>Shewanellaceae</taxon>
        <taxon>Shewanella</taxon>
    </lineage>
</organism>
<keyword id="KW-0963">Cytoplasm</keyword>
<keyword id="KW-0227">DNA damage</keyword>
<keyword id="KW-0233">DNA recombination</keyword>
<keyword id="KW-0234">DNA repair</keyword>
<keyword id="KW-0238">DNA-binding</keyword>
<sequence>MIGRLRGVLVEKQAPEILMDVNGVGYELQMPLTSFYELPEIDHETVVYTHFVVREDAQLLYGFITKQERALFRLLIKTNGVGPKLALTILSGMTASEFVGCVERDDIVTLVKLPGVGKKTAERLLVEMRDKLKSLMEASAGSEREFVLQSNYSPTPTVNSAEEDAISALISLGYKPPQASKSVSAAYKEGMDSETLIKAALKSML</sequence>
<reference key="1">
    <citation type="submission" date="2006-12" db="EMBL/GenBank/DDBJ databases">
        <title>Complete sequence of Shewanella sp. W3-18-1.</title>
        <authorList>
            <consortium name="US DOE Joint Genome Institute"/>
            <person name="Copeland A."/>
            <person name="Lucas S."/>
            <person name="Lapidus A."/>
            <person name="Barry K."/>
            <person name="Detter J.C."/>
            <person name="Glavina del Rio T."/>
            <person name="Hammon N."/>
            <person name="Israni S."/>
            <person name="Dalin E."/>
            <person name="Tice H."/>
            <person name="Pitluck S."/>
            <person name="Chain P."/>
            <person name="Malfatti S."/>
            <person name="Shin M."/>
            <person name="Vergez L."/>
            <person name="Schmutz J."/>
            <person name="Larimer F."/>
            <person name="Land M."/>
            <person name="Hauser L."/>
            <person name="Kyrpides N."/>
            <person name="Lykidis A."/>
            <person name="Tiedje J."/>
            <person name="Richardson P."/>
        </authorList>
    </citation>
    <scope>NUCLEOTIDE SEQUENCE [LARGE SCALE GENOMIC DNA]</scope>
    <source>
        <strain>W3-18-1</strain>
    </source>
</reference>
<gene>
    <name evidence="1" type="primary">ruvA</name>
    <name type="ordered locus">Sputw3181_2070</name>
</gene>
<dbReference type="EMBL" id="CP000503">
    <property type="protein sequence ID" value="ABM24898.1"/>
    <property type="molecule type" value="Genomic_DNA"/>
</dbReference>
<dbReference type="RefSeq" id="WP_011789369.1">
    <property type="nucleotide sequence ID" value="NC_008750.1"/>
</dbReference>
<dbReference type="SMR" id="A1RJQ3"/>
<dbReference type="GeneID" id="67443507"/>
<dbReference type="KEGG" id="shw:Sputw3181_2070"/>
<dbReference type="HOGENOM" id="CLU_087936_0_0_6"/>
<dbReference type="Proteomes" id="UP000002597">
    <property type="component" value="Chromosome"/>
</dbReference>
<dbReference type="GO" id="GO:0005737">
    <property type="term" value="C:cytoplasm"/>
    <property type="evidence" value="ECO:0007669"/>
    <property type="project" value="UniProtKB-SubCell"/>
</dbReference>
<dbReference type="GO" id="GO:0009379">
    <property type="term" value="C:Holliday junction helicase complex"/>
    <property type="evidence" value="ECO:0007669"/>
    <property type="project" value="InterPro"/>
</dbReference>
<dbReference type="GO" id="GO:0048476">
    <property type="term" value="C:Holliday junction resolvase complex"/>
    <property type="evidence" value="ECO:0007669"/>
    <property type="project" value="UniProtKB-UniRule"/>
</dbReference>
<dbReference type="GO" id="GO:0005524">
    <property type="term" value="F:ATP binding"/>
    <property type="evidence" value="ECO:0007669"/>
    <property type="project" value="InterPro"/>
</dbReference>
<dbReference type="GO" id="GO:0000400">
    <property type="term" value="F:four-way junction DNA binding"/>
    <property type="evidence" value="ECO:0007669"/>
    <property type="project" value="UniProtKB-UniRule"/>
</dbReference>
<dbReference type="GO" id="GO:0009378">
    <property type="term" value="F:four-way junction helicase activity"/>
    <property type="evidence" value="ECO:0007669"/>
    <property type="project" value="InterPro"/>
</dbReference>
<dbReference type="GO" id="GO:0006310">
    <property type="term" value="P:DNA recombination"/>
    <property type="evidence" value="ECO:0007669"/>
    <property type="project" value="UniProtKB-UniRule"/>
</dbReference>
<dbReference type="GO" id="GO:0006281">
    <property type="term" value="P:DNA repair"/>
    <property type="evidence" value="ECO:0007669"/>
    <property type="project" value="UniProtKB-UniRule"/>
</dbReference>
<dbReference type="CDD" id="cd14332">
    <property type="entry name" value="UBA_RuvA_C"/>
    <property type="match status" value="1"/>
</dbReference>
<dbReference type="Gene3D" id="1.10.150.20">
    <property type="entry name" value="5' to 3' exonuclease, C-terminal subdomain"/>
    <property type="match status" value="1"/>
</dbReference>
<dbReference type="Gene3D" id="1.10.8.10">
    <property type="entry name" value="DNA helicase RuvA subunit, C-terminal domain"/>
    <property type="match status" value="1"/>
</dbReference>
<dbReference type="Gene3D" id="2.40.50.140">
    <property type="entry name" value="Nucleic acid-binding proteins"/>
    <property type="match status" value="1"/>
</dbReference>
<dbReference type="HAMAP" id="MF_00031">
    <property type="entry name" value="DNA_HJ_migration_RuvA"/>
    <property type="match status" value="1"/>
</dbReference>
<dbReference type="InterPro" id="IPR013849">
    <property type="entry name" value="DNA_helicase_Holl-junc_RuvA_I"/>
</dbReference>
<dbReference type="InterPro" id="IPR003583">
    <property type="entry name" value="Hlx-hairpin-Hlx_DNA-bd_motif"/>
</dbReference>
<dbReference type="InterPro" id="IPR012340">
    <property type="entry name" value="NA-bd_OB-fold"/>
</dbReference>
<dbReference type="InterPro" id="IPR000085">
    <property type="entry name" value="RuvA"/>
</dbReference>
<dbReference type="InterPro" id="IPR010994">
    <property type="entry name" value="RuvA_2-like"/>
</dbReference>
<dbReference type="InterPro" id="IPR011114">
    <property type="entry name" value="RuvA_C"/>
</dbReference>
<dbReference type="InterPro" id="IPR036267">
    <property type="entry name" value="RuvA_C_sf"/>
</dbReference>
<dbReference type="NCBIfam" id="TIGR00084">
    <property type="entry name" value="ruvA"/>
    <property type="match status" value="1"/>
</dbReference>
<dbReference type="Pfam" id="PF14520">
    <property type="entry name" value="HHH_5"/>
    <property type="match status" value="1"/>
</dbReference>
<dbReference type="Pfam" id="PF07499">
    <property type="entry name" value="RuvA_C"/>
    <property type="match status" value="1"/>
</dbReference>
<dbReference type="Pfam" id="PF01330">
    <property type="entry name" value="RuvA_N"/>
    <property type="match status" value="1"/>
</dbReference>
<dbReference type="SMART" id="SM00278">
    <property type="entry name" value="HhH1"/>
    <property type="match status" value="2"/>
</dbReference>
<dbReference type="SUPFAM" id="SSF46929">
    <property type="entry name" value="DNA helicase RuvA subunit, C-terminal domain"/>
    <property type="match status" value="1"/>
</dbReference>
<dbReference type="SUPFAM" id="SSF50249">
    <property type="entry name" value="Nucleic acid-binding proteins"/>
    <property type="match status" value="1"/>
</dbReference>
<dbReference type="SUPFAM" id="SSF47781">
    <property type="entry name" value="RuvA domain 2-like"/>
    <property type="match status" value="1"/>
</dbReference>
<protein>
    <recommendedName>
        <fullName evidence="1">Holliday junction branch migration complex subunit RuvA</fullName>
    </recommendedName>
</protein>
<name>RUVA_SHESW</name>